<protein>
    <recommendedName>
        <fullName evidence="16">Methylcytosine dioxygenase TET3</fullName>
        <ecNumber evidence="12">1.14.11.80</ecNumber>
    </recommendedName>
</protein>
<accession>O43151</accession>
<accession>A6NEI3</accession>
<accession>J3KNF3</accession>
<accession>K9JJH7</accession>
<accession>Q86Z24</accession>
<accession>Q8TBM9</accession>
<feature type="chain" id="PRO_0000050750" description="Methylcytosine dioxygenase TET3">
    <location>
        <begin position="1"/>
        <end position="1795"/>
    </location>
</feature>
<feature type="zinc finger region" description="CXXC-type" evidence="3 11">
    <location>
        <begin position="50"/>
        <end position="90"/>
    </location>
</feature>
<feature type="region of interest" description="Disordered" evidence="4">
    <location>
        <begin position="142"/>
        <end position="172"/>
    </location>
</feature>
<feature type="region of interest" description="Disordered" evidence="4">
    <location>
        <begin position="229"/>
        <end position="251"/>
    </location>
</feature>
<feature type="region of interest" description="Disordered" evidence="4">
    <location>
        <begin position="370"/>
        <end position="396"/>
    </location>
</feature>
<feature type="region of interest" description="Disordered" evidence="4">
    <location>
        <begin position="408"/>
        <end position="461"/>
    </location>
</feature>
<feature type="region of interest" description="Disordered" evidence="4">
    <location>
        <begin position="478"/>
        <end position="704"/>
    </location>
</feature>
<feature type="region of interest" description="Interaction with DNA" evidence="1">
    <location>
        <begin position="985"/>
        <end position="998"/>
    </location>
</feature>
<feature type="region of interest" description="Disordered" evidence="4">
    <location>
        <begin position="1345"/>
        <end position="1366"/>
    </location>
</feature>
<feature type="region of interest" description="Disordered" evidence="4">
    <location>
        <begin position="1395"/>
        <end position="1430"/>
    </location>
</feature>
<feature type="region of interest" description="Disordered" evidence="4">
    <location>
        <begin position="1608"/>
        <end position="1638"/>
    </location>
</feature>
<feature type="compositionally biased region" description="Polar residues" evidence="4">
    <location>
        <begin position="370"/>
        <end position="380"/>
    </location>
</feature>
<feature type="compositionally biased region" description="Low complexity" evidence="4">
    <location>
        <begin position="416"/>
        <end position="425"/>
    </location>
</feature>
<feature type="compositionally biased region" description="Polar residues" evidence="4">
    <location>
        <begin position="513"/>
        <end position="529"/>
    </location>
</feature>
<feature type="compositionally biased region" description="Pro residues" evidence="4">
    <location>
        <begin position="551"/>
        <end position="569"/>
    </location>
</feature>
<feature type="compositionally biased region" description="Polar residues" evidence="4">
    <location>
        <begin position="682"/>
        <end position="696"/>
    </location>
</feature>
<feature type="binding site" evidence="3 11 20">
    <location>
        <position position="57"/>
    </location>
    <ligand>
        <name>Zn(2+)</name>
        <dbReference type="ChEBI" id="CHEBI:29105"/>
        <label>1</label>
    </ligand>
</feature>
<feature type="binding site" evidence="3 11 20">
    <location>
        <position position="60"/>
    </location>
    <ligand>
        <name>Zn(2+)</name>
        <dbReference type="ChEBI" id="CHEBI:29105"/>
        <label>1</label>
    </ligand>
</feature>
<feature type="binding site" evidence="3 11 20">
    <location>
        <position position="63"/>
    </location>
    <ligand>
        <name>Zn(2+)</name>
        <dbReference type="ChEBI" id="CHEBI:29105"/>
        <label>1</label>
    </ligand>
</feature>
<feature type="binding site" evidence="3 11 20">
    <location>
        <position position="69"/>
    </location>
    <ligand>
        <name>Zn(2+)</name>
        <dbReference type="ChEBI" id="CHEBI:29105"/>
        <label>2</label>
    </ligand>
</feature>
<feature type="binding site" evidence="3 11 20">
    <location>
        <position position="72"/>
    </location>
    <ligand>
        <name>Zn(2+)</name>
        <dbReference type="ChEBI" id="CHEBI:29105"/>
        <label>2</label>
    </ligand>
</feature>
<feature type="binding site" evidence="3 11 20">
    <location>
        <position position="75"/>
    </location>
    <ligand>
        <name>Zn(2+)</name>
        <dbReference type="ChEBI" id="CHEBI:29105"/>
        <label>2</label>
    </ligand>
</feature>
<feature type="binding site" evidence="3 11 20">
    <location>
        <position position="84"/>
    </location>
    <ligand>
        <name>Zn(2+)</name>
        <dbReference type="ChEBI" id="CHEBI:29105"/>
        <label>2</label>
    </ligand>
</feature>
<feature type="binding site" evidence="3 11 20">
    <location>
        <position position="89"/>
    </location>
    <ligand>
        <name>Zn(2+)</name>
        <dbReference type="ChEBI" id="CHEBI:29105"/>
        <label>1</label>
    </ligand>
</feature>
<feature type="binding site" evidence="1">
    <location>
        <position position="828"/>
    </location>
    <ligand>
        <name>Zn(2+)</name>
        <dbReference type="ChEBI" id="CHEBI:29105"/>
        <label>3</label>
    </ligand>
</feature>
<feature type="binding site" evidence="1">
    <location>
        <position position="830"/>
    </location>
    <ligand>
        <name>Zn(2+)</name>
        <dbReference type="ChEBI" id="CHEBI:29105"/>
        <label>3</label>
    </ligand>
</feature>
<feature type="binding site" evidence="1">
    <location>
        <position position="888"/>
    </location>
    <ligand>
        <name>Zn(2+)</name>
        <dbReference type="ChEBI" id="CHEBI:29105"/>
        <label>4</label>
    </ligand>
</feature>
<feature type="binding site" evidence="1">
    <location>
        <position position="914"/>
    </location>
    <ligand>
        <name>Zn(2+)</name>
        <dbReference type="ChEBI" id="CHEBI:29105"/>
        <label>1</label>
    </ligand>
</feature>
<feature type="binding site" evidence="1">
    <location>
        <position position="916"/>
    </location>
    <ligand>
        <name>Zn(2+)</name>
        <dbReference type="ChEBI" id="CHEBI:29105"/>
        <label>3</label>
    </ligand>
</feature>
<feature type="binding site" evidence="1">
    <location>
        <position position="956"/>
    </location>
    <ligand>
        <name>2-oxoglutarate</name>
        <dbReference type="ChEBI" id="CHEBI:16810"/>
    </ligand>
</feature>
<feature type="binding site" evidence="1">
    <location>
        <position position="966"/>
    </location>
    <ligand>
        <name>Zn(2+)</name>
        <dbReference type="ChEBI" id="CHEBI:29105"/>
        <label>4</label>
    </ligand>
</feature>
<feature type="binding site" evidence="1">
    <location>
        <position position="968"/>
    </location>
    <ligand>
        <name>Zn(2+)</name>
        <dbReference type="ChEBI" id="CHEBI:29105"/>
        <label>4</label>
    </ligand>
</feature>
<feature type="binding site" evidence="1">
    <location>
        <position position="984"/>
    </location>
    <ligand>
        <name>Zn(2+)</name>
        <dbReference type="ChEBI" id="CHEBI:29105"/>
        <label>3</label>
    </ligand>
</feature>
<feature type="binding site" evidence="1">
    <location>
        <position position="993"/>
    </location>
    <ligand>
        <name>Zn(2+)</name>
        <dbReference type="ChEBI" id="CHEBI:29105"/>
        <label>3</label>
    </ligand>
</feature>
<feature type="binding site" evidence="1">
    <location>
        <position position="1053"/>
    </location>
    <ligand>
        <name>Zn(2+)</name>
        <dbReference type="ChEBI" id="CHEBI:29105"/>
        <label>3</label>
    </ligand>
</feature>
<feature type="binding site" evidence="1">
    <location>
        <position position="1069"/>
    </location>
    <ligand>
        <name>2-oxoglutarate</name>
        <dbReference type="ChEBI" id="CHEBI:16810"/>
    </ligand>
</feature>
<feature type="binding site" evidence="1">
    <location>
        <position position="1075"/>
    </location>
    <ligand>
        <name>Zn(2+)</name>
        <dbReference type="ChEBI" id="CHEBI:29105"/>
        <label>2</label>
    </ligand>
</feature>
<feature type="binding site" evidence="1">
    <location>
        <position position="1077"/>
    </location>
    <ligand>
        <name>Fe cation</name>
        <dbReference type="ChEBI" id="CHEBI:24875"/>
        <note>catalytic</note>
    </ligand>
</feature>
<feature type="binding site" evidence="1">
    <location>
        <position position="1079"/>
    </location>
    <ligand>
        <name>Fe cation</name>
        <dbReference type="ChEBI" id="CHEBI:24875"/>
        <note>catalytic</note>
    </ligand>
</feature>
<feature type="binding site" evidence="1">
    <location>
        <position position="1082"/>
    </location>
    <ligand>
        <name>substrate</name>
    </ligand>
</feature>
<feature type="binding site" evidence="1">
    <location>
        <position position="1111"/>
    </location>
    <ligand>
        <name>2-oxoglutarate</name>
        <dbReference type="ChEBI" id="CHEBI:16810"/>
    </ligand>
</feature>
<feature type="binding site" evidence="1">
    <location>
        <position position="1673"/>
    </location>
    <ligand>
        <name>Fe cation</name>
        <dbReference type="ChEBI" id="CHEBI:24875"/>
        <note>catalytic</note>
    </ligand>
</feature>
<feature type="binding site" evidence="1">
    <location>
        <begin position="1688"/>
        <end position="1690"/>
    </location>
    <ligand>
        <name>2-oxoglutarate</name>
        <dbReference type="ChEBI" id="CHEBI:16810"/>
    </ligand>
</feature>
<feature type="binding site" evidence="1">
    <location>
        <begin position="1694"/>
        <end position="1696"/>
    </location>
    <ligand>
        <name>substrate</name>
    </ligand>
</feature>
<feature type="binding site" evidence="1">
    <location>
        <position position="1704"/>
    </location>
    <ligand>
        <name>Zn(2+)</name>
        <dbReference type="ChEBI" id="CHEBI:29105"/>
        <label>3</label>
    </ligand>
</feature>
<feature type="cross-link" description="Glycyl lysine isopeptide (Lys-Gly) (interchain with G-Cter in SUMO2)" evidence="22">
    <location>
        <position position="491"/>
    </location>
</feature>
<feature type="cross-link" description="Glycyl lysine isopeptide (Lys-Gly) (interchain with G-Cter in ubiquitin)" evidence="10">
    <location>
        <position position="994"/>
    </location>
</feature>
<feature type="cross-link" description="Glycyl lysine isopeptide (Lys-Gly) (interchain with G-Cter in SUMO2)" evidence="22">
    <location>
        <position position="1188"/>
    </location>
</feature>
<feature type="cross-link" description="Glycyl lysine isopeptide (Lys-Gly) (interchain with G-Cter in SUMO2)" evidence="22">
    <location>
        <position position="1219"/>
    </location>
</feature>
<feature type="cross-link" description="Glycyl lysine isopeptide (Lys-Gly) (interchain with G-Cter in SUMO2)" evidence="21 22">
    <location>
        <position position="1397"/>
    </location>
</feature>
<feature type="cross-link" description="Glycyl lysine isopeptide (Lys-Gly) (interchain with G-Cter in SUMO2)" evidence="22">
    <location>
        <position position="1561"/>
    </location>
</feature>
<feature type="splice variant" id="VSP_034192" description="In isoform 3." evidence="15">
    <location>
        <begin position="863"/>
        <end position="1795"/>
    </location>
</feature>
<feature type="splice variant" id="VSP_021628" description="In isoform 2." evidence="14">
    <location>
        <begin position="1575"/>
        <end position="1690"/>
    </location>
</feature>
<feature type="sequence variant" id="VAR_062235" description="In dbSNP:rs57955681.">
    <original>R</original>
    <variation>Q</variation>
    <location>
        <position position="712"/>
    </location>
</feature>
<feature type="sequence variant" id="VAR_083831" description="In BEFAHRS; uncertain significance; no effect on methylcytosine dioxygenase activity; dbSNP:rs534089911." evidence="12">
    <original>R</original>
    <variation>C</variation>
    <location>
        <position position="752"/>
    </location>
</feature>
<feature type="sequence variant" id="VAR_083832" description="In BEFAHRS; dbSNP:rs1573856970." evidence="12">
    <original>T</original>
    <variation>M</variation>
    <location>
        <position position="851"/>
    </location>
</feature>
<feature type="sequence variant" id="VAR_083833" description="In BEFAHRS; decreases methylcytosine dioxygenase activity; dbSNP:rs1227643933." evidence="12">
    <original>V</original>
    <variation>L</variation>
    <location>
        <position position="908"/>
    </location>
</feature>
<feature type="sequence variant" id="VAR_083834" description="In BEFAHRS; decreases methylcytosine dioxygenase activity; dbSNP:rs1573906351." evidence="12">
    <original>F</original>
    <variation>C</variation>
    <location>
        <position position="1072"/>
    </location>
</feature>
<feature type="sequence variant" id="VAR_083835" description="In BEFAHRS; decreases methylcytosine dioxygenase activity; dbSNP:rs1573906389." evidence="12">
    <original>A</original>
    <variation>T</variation>
    <location>
        <position position="1076"/>
    </location>
</feature>
<feature type="sequence variant" id="VAR_083836" description="In BEFAHRS; decreases methylcytosine dioxygenase activity; dbSNP:rs1174857008." evidence="12">
    <original>V</original>
    <variation>M</variation>
    <location>
        <position position="1089"/>
    </location>
</feature>
<feature type="sequence variant" id="VAR_083837" description="In BEFAHRS; dbSNP:rs1691236972." evidence="12">
    <original>P</original>
    <variation>L</variation>
    <location>
        <position position="1677"/>
    </location>
</feature>
<feature type="sequence variant" id="VAR_083838" description="In BEFAHRS." evidence="12">
    <location>
        <begin position="1695"/>
        <end position="1795"/>
    </location>
</feature>
<feature type="mutagenesis site" description="Abolishes methylcytosine dioxygenase activity." evidence="12">
    <original>HKD</original>
    <variation>YKA</variation>
    <location>
        <begin position="1077"/>
        <end position="1079"/>
    </location>
</feature>
<feature type="helix" evidence="23">
    <location>
        <begin position="61"/>
        <end position="64"/>
    </location>
</feature>
<feature type="strand" evidence="23">
    <location>
        <begin position="70"/>
        <end position="72"/>
    </location>
</feature>
<feature type="helix" evidence="23">
    <location>
        <begin position="73"/>
        <end position="76"/>
    </location>
</feature>
<feature type="helix" evidence="23">
    <location>
        <begin position="78"/>
        <end position="80"/>
    </location>
</feature>
<feature type="turn" evidence="23">
    <location>
        <begin position="85"/>
        <end position="87"/>
    </location>
</feature>
<feature type="turn" evidence="23">
    <location>
        <begin position="90"/>
        <end position="93"/>
    </location>
</feature>
<gene>
    <name evidence="19" type="primary">TET3</name>
    <name evidence="13" type="synonym">CXXC10</name>
    <name type="synonym">KIAA0401</name>
</gene>
<dbReference type="EC" id="1.14.11.80" evidence="12"/>
<dbReference type="EMBL" id="HQ220209">
    <property type="protein sequence ID" value="ADU77107.1"/>
    <property type="molecule type" value="mRNA"/>
</dbReference>
<dbReference type="EMBL" id="AC110801">
    <property type="status" value="NOT_ANNOTATED_CDS"/>
    <property type="molecule type" value="Genomic_DNA"/>
</dbReference>
<dbReference type="EMBL" id="AC073263">
    <property type="protein sequence ID" value="AAX93057.1"/>
    <property type="status" value="ALT_SEQ"/>
    <property type="molecule type" value="Genomic_DNA"/>
</dbReference>
<dbReference type="EMBL" id="AC073046">
    <property type="status" value="NOT_ANNOTATED_CDS"/>
    <property type="molecule type" value="Genomic_DNA"/>
</dbReference>
<dbReference type="EMBL" id="AF466365">
    <property type="protein sequence ID" value="AAO33386.1"/>
    <property type="status" value="ALT_INIT"/>
    <property type="molecule type" value="mRNA"/>
</dbReference>
<dbReference type="EMBL" id="BC022243">
    <property type="protein sequence ID" value="AAH22243.1"/>
    <property type="status" value="ALT_INIT"/>
    <property type="molecule type" value="mRNA"/>
</dbReference>
<dbReference type="EMBL" id="AB007861">
    <property type="protein sequence ID" value="BAA23697.1"/>
    <property type="molecule type" value="mRNA"/>
</dbReference>
<dbReference type="CCDS" id="CCDS46339.2">
    <molecule id="O43151-1"/>
</dbReference>
<dbReference type="RefSeq" id="NP_001274420.1">
    <molecule id="O43151-1"/>
    <property type="nucleotide sequence ID" value="NM_001287491.2"/>
</dbReference>
<dbReference type="RefSeq" id="XP_005264244.1">
    <property type="nucleotide sequence ID" value="XM_005264187.3"/>
</dbReference>
<dbReference type="RefSeq" id="XP_047299615.1">
    <molecule id="O43151-1"/>
    <property type="nucleotide sequence ID" value="XM_047443659.1"/>
</dbReference>
<dbReference type="RefSeq" id="XP_047299616.1">
    <molecule id="O43151-1"/>
    <property type="nucleotide sequence ID" value="XM_047443660.1"/>
</dbReference>
<dbReference type="RefSeq" id="XP_054196928.1">
    <molecule id="O43151-1"/>
    <property type="nucleotide sequence ID" value="XM_054340953.1"/>
</dbReference>
<dbReference type="RefSeq" id="XP_054196929.1">
    <molecule id="O43151-1"/>
    <property type="nucleotide sequence ID" value="XM_054340954.1"/>
</dbReference>
<dbReference type="PDB" id="4Z3C">
    <property type="method" value="X-ray"/>
    <property type="resolution" value="1.57 A"/>
    <property type="chains" value="C=49-98"/>
</dbReference>
<dbReference type="PDB" id="8U2Y">
    <property type="method" value="NMR"/>
    <property type="chains" value="A=1451-1459"/>
</dbReference>
<dbReference type="PDBsum" id="4Z3C"/>
<dbReference type="PDBsum" id="8U2Y"/>
<dbReference type="SMR" id="O43151"/>
<dbReference type="BioGRID" id="128327">
    <property type="interactions" value="22"/>
</dbReference>
<dbReference type="FunCoup" id="O43151">
    <property type="interactions" value="2760"/>
</dbReference>
<dbReference type="IntAct" id="O43151">
    <property type="interactions" value="34"/>
</dbReference>
<dbReference type="MINT" id="O43151"/>
<dbReference type="STRING" id="9606.ENSP00000386869"/>
<dbReference type="BindingDB" id="O43151"/>
<dbReference type="ChEMBL" id="CHEMBL4879414"/>
<dbReference type="GlyGen" id="O43151">
    <property type="glycosylation" value="15 sites, 1 O-linked glycan (13 sites)"/>
</dbReference>
<dbReference type="iPTMnet" id="O43151"/>
<dbReference type="PhosphoSitePlus" id="O43151"/>
<dbReference type="BioMuta" id="TET3"/>
<dbReference type="jPOST" id="O43151"/>
<dbReference type="MassIVE" id="O43151"/>
<dbReference type="PaxDb" id="9606-ENSP00000386869"/>
<dbReference type="PeptideAtlas" id="O43151"/>
<dbReference type="ProteomicsDB" id="48772">
    <molecule id="O43151-1"/>
</dbReference>
<dbReference type="ProteomicsDB" id="48773">
    <molecule id="O43151-2"/>
</dbReference>
<dbReference type="ProteomicsDB" id="48774">
    <molecule id="O43151-3"/>
</dbReference>
<dbReference type="Antibodypedia" id="31410">
    <property type="antibodies" value="374 antibodies from 30 providers"/>
</dbReference>
<dbReference type="DNASU" id="200424"/>
<dbReference type="Ensembl" id="ENST00000409262.8">
    <molecule id="O43151-1"/>
    <property type="protein sequence ID" value="ENSP00000386869.3"/>
    <property type="gene ID" value="ENSG00000187605.17"/>
</dbReference>
<dbReference type="GeneID" id="200424"/>
<dbReference type="KEGG" id="hsa:200424"/>
<dbReference type="MANE-Select" id="ENST00000409262.8">
    <property type="protein sequence ID" value="ENSP00000386869.3"/>
    <property type="RefSeq nucleotide sequence ID" value="NM_001287491.2"/>
    <property type="RefSeq protein sequence ID" value="NP_001274420.1"/>
</dbReference>
<dbReference type="UCSC" id="uc002skb.6">
    <molecule id="O43151-1"/>
    <property type="organism name" value="human"/>
</dbReference>
<dbReference type="UCSC" id="uc061kse.1">
    <property type="organism name" value="human"/>
</dbReference>
<dbReference type="AGR" id="HGNC:28313"/>
<dbReference type="CTD" id="200424"/>
<dbReference type="DisGeNET" id="200424"/>
<dbReference type="GeneCards" id="TET3"/>
<dbReference type="GeneReviews" id="TET3"/>
<dbReference type="HGNC" id="HGNC:28313">
    <property type="gene designation" value="TET3"/>
</dbReference>
<dbReference type="HPA" id="ENSG00000187605">
    <property type="expression patterns" value="Tissue enhanced (bone marrow, skin)"/>
</dbReference>
<dbReference type="MalaCards" id="TET3"/>
<dbReference type="MIM" id="613555">
    <property type="type" value="gene"/>
</dbReference>
<dbReference type="MIM" id="618798">
    <property type="type" value="phenotype"/>
</dbReference>
<dbReference type="neXtProt" id="NX_O43151"/>
<dbReference type="OpenTargets" id="ENSG00000187605"/>
<dbReference type="Orphanet" id="684216">
    <property type="disease" value="Intellectual disability-facial dysmorphism-joint hypermobility-hearing loss syndrome"/>
</dbReference>
<dbReference type="PharmGKB" id="PA162405645"/>
<dbReference type="VEuPathDB" id="HostDB:ENSG00000187605"/>
<dbReference type="eggNOG" id="ENOG502QURD">
    <property type="taxonomic scope" value="Eukaryota"/>
</dbReference>
<dbReference type="GeneTree" id="ENSGT00940000157631"/>
<dbReference type="HOGENOM" id="CLU_001618_3_0_1"/>
<dbReference type="InParanoid" id="O43151"/>
<dbReference type="OMA" id="SVYSCHS"/>
<dbReference type="OrthoDB" id="8854879at2759"/>
<dbReference type="PAN-GO" id="O43151">
    <property type="GO annotations" value="5 GO annotations based on evolutionary models"/>
</dbReference>
<dbReference type="PhylomeDB" id="O43151"/>
<dbReference type="TreeFam" id="TF342373"/>
<dbReference type="PathwayCommons" id="O43151"/>
<dbReference type="Reactome" id="R-HSA-5221030">
    <property type="pathway name" value="TET1,2,3 and TDG demethylate DNA"/>
</dbReference>
<dbReference type="Reactome" id="R-HSA-9821002">
    <property type="pathway name" value="Chromatin modifications during the maternal to zygotic transition (MZT)"/>
</dbReference>
<dbReference type="SignaLink" id="O43151"/>
<dbReference type="SIGNOR" id="O43151"/>
<dbReference type="BioGRID-ORCS" id="200424">
    <property type="hits" value="17 hits in 1174 CRISPR screens"/>
</dbReference>
<dbReference type="ChiTaRS" id="TET3">
    <property type="organism name" value="human"/>
</dbReference>
<dbReference type="GenomeRNAi" id="200424"/>
<dbReference type="Pharos" id="O43151">
    <property type="development level" value="Tbio"/>
</dbReference>
<dbReference type="PRO" id="PR:O43151"/>
<dbReference type="Proteomes" id="UP000005640">
    <property type="component" value="Chromosome 2"/>
</dbReference>
<dbReference type="RNAct" id="O43151">
    <property type="molecule type" value="protein"/>
</dbReference>
<dbReference type="Bgee" id="ENSG00000187605">
    <property type="expression patterns" value="Expressed in oocyte and 185 other cell types or tissues"/>
</dbReference>
<dbReference type="ExpressionAtlas" id="O43151">
    <property type="expression patterns" value="baseline and differential"/>
</dbReference>
<dbReference type="GO" id="GO:0005694">
    <property type="term" value="C:chromosome"/>
    <property type="evidence" value="ECO:0007669"/>
    <property type="project" value="UniProtKB-SubCell"/>
</dbReference>
<dbReference type="GO" id="GO:0005737">
    <property type="term" value="C:cytoplasm"/>
    <property type="evidence" value="ECO:0000250"/>
    <property type="project" value="UniProtKB"/>
</dbReference>
<dbReference type="GO" id="GO:0001939">
    <property type="term" value="C:female pronucleus"/>
    <property type="evidence" value="ECO:0007669"/>
    <property type="project" value="Ensembl"/>
</dbReference>
<dbReference type="GO" id="GO:0001940">
    <property type="term" value="C:male pronucleus"/>
    <property type="evidence" value="ECO:0000250"/>
    <property type="project" value="UniProtKB"/>
</dbReference>
<dbReference type="GO" id="GO:0005634">
    <property type="term" value="C:nucleus"/>
    <property type="evidence" value="ECO:0000318"/>
    <property type="project" value="GO_Central"/>
</dbReference>
<dbReference type="GO" id="GO:0070579">
    <property type="term" value="F:5-methylcytosine dioxygenase activity"/>
    <property type="evidence" value="ECO:0000250"/>
    <property type="project" value="UniProtKB"/>
</dbReference>
<dbReference type="GO" id="GO:0008327">
    <property type="term" value="F:methyl-CpG binding"/>
    <property type="evidence" value="ECO:0000314"/>
    <property type="project" value="UniProtKB"/>
</dbReference>
<dbReference type="GO" id="GO:0000978">
    <property type="term" value="F:RNA polymerase II cis-regulatory region sequence-specific DNA binding"/>
    <property type="evidence" value="ECO:0000314"/>
    <property type="project" value="ARUK-UCL"/>
</dbReference>
<dbReference type="GO" id="GO:0008270">
    <property type="term" value="F:zinc ion binding"/>
    <property type="evidence" value="ECO:0000314"/>
    <property type="project" value="UniProtKB"/>
</dbReference>
<dbReference type="GO" id="GO:0141167">
    <property type="term" value="P:chromosomal 5-methylcytosine DNA demethylation, oxidation pathway"/>
    <property type="evidence" value="ECO:0007669"/>
    <property type="project" value="InterPro"/>
</dbReference>
<dbReference type="GO" id="GO:0044727">
    <property type="term" value="P:epigenetic programing of male pronucleus"/>
    <property type="evidence" value="ECO:0000250"/>
    <property type="project" value="UniProtKB"/>
</dbReference>
<dbReference type="GO" id="GO:0044029">
    <property type="term" value="P:positive regulation of gene expression via chromosomal CpG island demethylation"/>
    <property type="evidence" value="ECO:0000250"/>
    <property type="project" value="ARUK-UCL"/>
</dbReference>
<dbReference type="GO" id="GO:0045944">
    <property type="term" value="P:positive regulation of transcription by RNA polymerase II"/>
    <property type="evidence" value="ECO:0000315"/>
    <property type="project" value="UniProtKB"/>
</dbReference>
<dbReference type="GO" id="GO:0006493">
    <property type="term" value="P:protein O-linked glycosylation"/>
    <property type="evidence" value="ECO:0000315"/>
    <property type="project" value="UniProtKB"/>
</dbReference>
<dbReference type="CDD" id="cd18897">
    <property type="entry name" value="TET3"/>
    <property type="match status" value="1"/>
</dbReference>
<dbReference type="InterPro" id="IPR024779">
    <property type="entry name" value="2OGFeDO_JBP1/TET_oxygenase_dom"/>
</dbReference>
<dbReference type="InterPro" id="IPR040175">
    <property type="entry name" value="TET1/2/3"/>
</dbReference>
<dbReference type="InterPro" id="IPR046942">
    <property type="entry name" value="TET_oxygenase"/>
</dbReference>
<dbReference type="InterPro" id="IPR002857">
    <property type="entry name" value="Znf_CXXC"/>
</dbReference>
<dbReference type="PANTHER" id="PTHR23358">
    <property type="entry name" value="METHYLCYTOSINE DIOXYGENASE TET"/>
    <property type="match status" value="1"/>
</dbReference>
<dbReference type="PANTHER" id="PTHR23358:SF6">
    <property type="entry name" value="METHYLCYTOSINE DIOXYGENASE TET"/>
    <property type="match status" value="1"/>
</dbReference>
<dbReference type="Pfam" id="PF12851">
    <property type="entry name" value="Tet_JBP"/>
    <property type="match status" value="1"/>
</dbReference>
<dbReference type="Pfam" id="PF02008">
    <property type="entry name" value="zf-CXXC"/>
    <property type="match status" value="1"/>
</dbReference>
<dbReference type="SMART" id="SM01333">
    <property type="entry name" value="Tet_JBP"/>
    <property type="match status" value="1"/>
</dbReference>
<dbReference type="PROSITE" id="PS51058">
    <property type="entry name" value="ZF_CXXC"/>
    <property type="match status" value="1"/>
</dbReference>
<evidence type="ECO:0000250" key="1">
    <source>
        <dbReference type="UniProtKB" id="Q6N021"/>
    </source>
</evidence>
<evidence type="ECO:0000250" key="2">
    <source>
        <dbReference type="UniProtKB" id="Q8BG87"/>
    </source>
</evidence>
<evidence type="ECO:0000255" key="3">
    <source>
        <dbReference type="PROSITE-ProRule" id="PRU00509"/>
    </source>
</evidence>
<evidence type="ECO:0000256" key="4">
    <source>
        <dbReference type="SAM" id="MobiDB-lite"/>
    </source>
</evidence>
<evidence type="ECO:0000269" key="5">
    <source>
    </source>
</evidence>
<evidence type="ECO:0000269" key="6">
    <source>
    </source>
</evidence>
<evidence type="ECO:0000269" key="7">
    <source>
    </source>
</evidence>
<evidence type="ECO:0000269" key="8">
    <source>
    </source>
</evidence>
<evidence type="ECO:0000269" key="9">
    <source>
    </source>
</evidence>
<evidence type="ECO:0000269" key="10">
    <source>
    </source>
</evidence>
<evidence type="ECO:0000269" key="11">
    <source>
    </source>
</evidence>
<evidence type="ECO:0000269" key="12">
    <source>
    </source>
</evidence>
<evidence type="ECO:0000303" key="13">
    <source>
    </source>
</evidence>
<evidence type="ECO:0000303" key="14">
    <source>
    </source>
</evidence>
<evidence type="ECO:0000303" key="15">
    <source ref="3"/>
</evidence>
<evidence type="ECO:0000305" key="16"/>
<evidence type="ECO:0000305" key="17">
    <source>
    </source>
</evidence>
<evidence type="ECO:0000312" key="18">
    <source>
        <dbReference type="EMBL" id="ADU77107.1"/>
    </source>
</evidence>
<evidence type="ECO:0000312" key="19">
    <source>
        <dbReference type="HGNC" id="HGNC:28313"/>
    </source>
</evidence>
<evidence type="ECO:0007744" key="20">
    <source>
        <dbReference type="PDB" id="4Z3C"/>
    </source>
</evidence>
<evidence type="ECO:0007744" key="21">
    <source>
    </source>
</evidence>
<evidence type="ECO:0007744" key="22">
    <source>
    </source>
</evidence>
<evidence type="ECO:0007829" key="23">
    <source>
        <dbReference type="PDB" id="4Z3C"/>
    </source>
</evidence>
<organism>
    <name type="scientific">Homo sapiens</name>
    <name type="common">Human</name>
    <dbReference type="NCBI Taxonomy" id="9606"/>
    <lineage>
        <taxon>Eukaryota</taxon>
        <taxon>Metazoa</taxon>
        <taxon>Chordata</taxon>
        <taxon>Craniata</taxon>
        <taxon>Vertebrata</taxon>
        <taxon>Euteleostomi</taxon>
        <taxon>Mammalia</taxon>
        <taxon>Eutheria</taxon>
        <taxon>Euarchontoglires</taxon>
        <taxon>Primates</taxon>
        <taxon>Haplorrhini</taxon>
        <taxon>Catarrhini</taxon>
        <taxon>Hominidae</taxon>
        <taxon>Homo</taxon>
    </lineage>
</organism>
<sequence length="1795" mass="193705">MSQFQVPLAVQPDLPGLYDFPQRQVMVGSFPGSGLSMAGSESQLRGGGDGRKKRKRCGTCEPCRRLENCGACTSCTNRRTHQICKLRKCEVLKKKVGLLKEVEIKAGEGAGPWGQGAAVKTGSELSPVDGPVPGQMDSGPVYHGDSRQLSASGVPVNGAREPAGPSLLGTGGPWRVDQKPDWEAAPGPAHTARLEDAHDLVAFSAVAEAVSSYGALSTRLYETFNREMSREAGNNSRGPRPGPEGCSAGSEDLDTLQTALALARHGMKPPNCNCDGPECPDYLEWLEGKIKSVVMEGGEERPRLPGPLPPGEAGLPAPSTRPLLSSEVPQISPQEGLPLSQSALSIAKEKNISLQTAIAIEALTQLSSALPQPSHSTPQASCPLPEALSPPAPFRSPQSYLRAPSWPVVPPEEHSSFAPDSSAFPPATPRTEFPEAWGTDTPPATPRSSWPMPRPSPDPMAELEQLLGSASDYIQSVFKRPEALPTKPKVKVEAPSSSPAPAPSPVLQREAPTPSSEPDTHQKAQTALQQHLHHKRSLFLEQVHDTSFPAPSEPSAPGWWPPPSSPVPRLPDRPPKEKKKKLPTPAGGPVGTEKAAPGIKPSVRKPIQIKKSRPREAQPLFPPVRQIVLEGLRSPASQEVQAHPPAPLPASQGSAVPLPPEPSLALFAPSPSRDSLLPPTQEMRSPSPMTALQPGSTGPLPPADDKLEELIRQFEAEFGDSFGLPGPPSVPIQDPENQQTCLPAPESPFATRSPKQIKIESSGAVTVLSTTCFHSEEGGQEATPTKAENPLTPTLSGFLESPLKYLDTPTKSLLDTPAKRAQAEFPTCDCVEQIVEKDEGPYYTHLGSGPTVASIRELMEERYGEKGKAIRIEKVIYTGKEGKSSRGCPIAKWVIRRHTLEEKLLCLVRHRAGHHCQNAVIVILILAWEGIPRSLGDTLYQELTDTLRKYGNPTSRRCGLNDDRTCACQGKDPNTCGASFSFGCSWSMYFNGCKYARSKTPRKFRLAGDNPKEEEVLRKSFQDLATEVAPLYKRLAPQAYQNQVTNEEIAIDCRLGLKEGRPFAGVTACMDFCAHAHKDQHNLYNGCTVVCTLTKEDNRCVGKIPEDEQLHVLPLYKMANTDEFGSEENQNAKVGSGAIQVLTAFPREVRRLPEPAKSCRQRQLEARKAAAEKKKIQKEKLSTPEKIKQEALELAGITSDPGLSLKGGLSQQGLKPSLKVEPQNHFSSFKYSGNAVVESYSVLGNCRPSDPYSMNSVYSYHSYYAQPSLTSVNGFHSKYALPSFSYYGFPSSNPVFPSQFLGPGAWGHSGSSGSFEKKPDLHALHNSLSPAYGGAEFAELPSQAVPTDAHHPTPHHQQPAYPGPKEYLLPKAPLLHSVSRDPSPFAQSSNCYNRSIKQEPVDPLTQAEPVPRDAGKMGKTPLSEVSQNGGPSHLWGQYSGGPSMSPKRTNGVGGSWGVFSSGESPAIVPDKLSSFGASCLAPSHFTDGQWGLFPGEGQQAASHSGGRLRGKPWSPCKFGNSTSALAGPSLTEKPWALGAGDFNSALKGSPGFQDKLWNPMKGEEGRIPAAGASQLDRAWQSFGLPLGSSEKLFGALKSEEKLWDPFSLEEGPAEEPPSKGAVKEEKGGGGAEEEEEELWSDSEHNFLDENIGGVAVAPAHGSILIECARRELHATTPLKKPNRCHPTRISLVFYQHKNLNQPNHGLALWEAKMKQLAERARARQEEAARLGLGQQEAKLYGKKRKWGGTVVAEPQQKEKKGVVPTRQALAVPTDSAVTVSSYAYTKVTGPYSRWI</sequence>
<proteinExistence type="evidence at protein level"/>
<reference evidence="18" key="1">
    <citation type="journal article" date="2012" name="Cell">
        <title>Tet3 CXXC domain and dioxygenase activity cooperatively regulate key genes for Xenopus eye and neural development.</title>
        <authorList>
            <person name="Xu Y."/>
            <person name="Xu C."/>
            <person name="Kato A."/>
            <person name="Tempel W."/>
            <person name="Abreu J.G."/>
            <person name="Bian C."/>
            <person name="Hu Y."/>
            <person name="Hu D."/>
            <person name="Zhao B."/>
            <person name="Cerovina T."/>
            <person name="Diao J."/>
            <person name="Wu F."/>
            <person name="He H.H."/>
            <person name="Cui Q."/>
            <person name="Clark E."/>
            <person name="Ma C."/>
            <person name="Barbara A."/>
            <person name="Veenstra G.J.C."/>
            <person name="Xu G."/>
            <person name="Kaiser U.B."/>
            <person name="Liu X.S."/>
            <person name="Sugrue S.P."/>
            <person name="He X."/>
            <person name="Min J."/>
            <person name="Kato Y."/>
            <person name="Shi Y.G."/>
        </authorList>
    </citation>
    <scope>NUCLEOTIDE SEQUENCE [MRNA] (ISOFORM 4)</scope>
    <scope>FUNCTION</scope>
</reference>
<reference key="2">
    <citation type="journal article" date="2005" name="Nature">
        <title>Generation and annotation of the DNA sequences of human chromosomes 2 and 4.</title>
        <authorList>
            <person name="Hillier L.W."/>
            <person name="Graves T.A."/>
            <person name="Fulton R.S."/>
            <person name="Fulton L.A."/>
            <person name="Pepin K.H."/>
            <person name="Minx P."/>
            <person name="Wagner-McPherson C."/>
            <person name="Layman D."/>
            <person name="Wylie K."/>
            <person name="Sekhon M."/>
            <person name="Becker M.C."/>
            <person name="Fewell G.A."/>
            <person name="Delehaunty K.D."/>
            <person name="Miner T.L."/>
            <person name="Nash W.E."/>
            <person name="Kremitzki C."/>
            <person name="Oddy L."/>
            <person name="Du H."/>
            <person name="Sun H."/>
            <person name="Bradshaw-Cordum H."/>
            <person name="Ali J."/>
            <person name="Carter J."/>
            <person name="Cordes M."/>
            <person name="Harris A."/>
            <person name="Isak A."/>
            <person name="van Brunt A."/>
            <person name="Nguyen C."/>
            <person name="Du F."/>
            <person name="Courtney L."/>
            <person name="Kalicki J."/>
            <person name="Ozersky P."/>
            <person name="Abbott S."/>
            <person name="Armstrong J."/>
            <person name="Belter E.A."/>
            <person name="Caruso L."/>
            <person name="Cedroni M."/>
            <person name="Cotton M."/>
            <person name="Davidson T."/>
            <person name="Desai A."/>
            <person name="Elliott G."/>
            <person name="Erb T."/>
            <person name="Fronick C."/>
            <person name="Gaige T."/>
            <person name="Haakenson W."/>
            <person name="Haglund K."/>
            <person name="Holmes A."/>
            <person name="Harkins R."/>
            <person name="Kim K."/>
            <person name="Kruchowski S.S."/>
            <person name="Strong C.M."/>
            <person name="Grewal N."/>
            <person name="Goyea E."/>
            <person name="Hou S."/>
            <person name="Levy A."/>
            <person name="Martinka S."/>
            <person name="Mead K."/>
            <person name="McLellan M.D."/>
            <person name="Meyer R."/>
            <person name="Randall-Maher J."/>
            <person name="Tomlinson C."/>
            <person name="Dauphin-Kohlberg S."/>
            <person name="Kozlowicz-Reilly A."/>
            <person name="Shah N."/>
            <person name="Swearengen-Shahid S."/>
            <person name="Snider J."/>
            <person name="Strong J.T."/>
            <person name="Thompson J."/>
            <person name="Yoakum M."/>
            <person name="Leonard S."/>
            <person name="Pearman C."/>
            <person name="Trani L."/>
            <person name="Radionenko M."/>
            <person name="Waligorski J.E."/>
            <person name="Wang C."/>
            <person name="Rock S.M."/>
            <person name="Tin-Wollam A.-M."/>
            <person name="Maupin R."/>
            <person name="Latreille P."/>
            <person name="Wendl M.C."/>
            <person name="Yang S.-P."/>
            <person name="Pohl C."/>
            <person name="Wallis J.W."/>
            <person name="Spieth J."/>
            <person name="Bieri T.A."/>
            <person name="Berkowicz N."/>
            <person name="Nelson J.O."/>
            <person name="Osborne J."/>
            <person name="Ding L."/>
            <person name="Meyer R."/>
            <person name="Sabo A."/>
            <person name="Shotland Y."/>
            <person name="Sinha P."/>
            <person name="Wohldmann P.E."/>
            <person name="Cook L.L."/>
            <person name="Hickenbotham M.T."/>
            <person name="Eldred J."/>
            <person name="Williams D."/>
            <person name="Jones T.A."/>
            <person name="She X."/>
            <person name="Ciccarelli F.D."/>
            <person name="Izaurralde E."/>
            <person name="Taylor J."/>
            <person name="Schmutz J."/>
            <person name="Myers R.M."/>
            <person name="Cox D.R."/>
            <person name="Huang X."/>
            <person name="McPherson J.D."/>
            <person name="Mardis E.R."/>
            <person name="Clifton S.W."/>
            <person name="Warren W.C."/>
            <person name="Chinwalla A.T."/>
            <person name="Eddy S.R."/>
            <person name="Marra M.A."/>
            <person name="Ovcharenko I."/>
            <person name="Furey T.S."/>
            <person name="Miller W."/>
            <person name="Eichler E.E."/>
            <person name="Bork P."/>
            <person name="Suyama M."/>
            <person name="Torrents D."/>
            <person name="Waterston R.H."/>
            <person name="Wilson R.K."/>
        </authorList>
    </citation>
    <scope>NUCLEOTIDE SEQUENCE [LARGE SCALE GENOMIC DNA]</scope>
</reference>
<reference key="3">
    <citation type="submission" date="2002-01" db="EMBL/GenBank/DDBJ databases">
        <authorList>
            <person name="Kim N.-S."/>
            <person name="Shon H.-Y."/>
            <person name="Oh J.-H."/>
            <person name="Lee J.-Y."/>
            <person name="Kim J.-M."/>
            <person name="Hahn Y."/>
            <person name="Kim Y."/>
        </authorList>
    </citation>
    <scope>NUCLEOTIDE SEQUENCE [MRNA] OF 421-1795 (ISOFORM 3)</scope>
</reference>
<reference key="4">
    <citation type="journal article" date="2004" name="Genome Res.">
        <title>The status, quality, and expansion of the NIH full-length cDNA project: the Mammalian Gene Collection (MGC).</title>
        <authorList>
            <consortium name="The MGC Project Team"/>
        </authorList>
    </citation>
    <scope>NUCLEOTIDE SEQUENCE [LARGE SCALE MRNA] OF 849-1795 (ISOFORM 4)</scope>
    <source>
        <tissue>Duodenum</tissue>
    </source>
</reference>
<reference key="5">
    <citation type="journal article" date="1997" name="DNA Res.">
        <title>Prediction of the coding sequences of unidentified human genes. VIII. 78 new cDNA clones from brain which code for large proteins in vitro.</title>
        <authorList>
            <person name="Ishikawa K."/>
            <person name="Nagase T."/>
            <person name="Nakajima D."/>
            <person name="Seki N."/>
            <person name="Ohira M."/>
            <person name="Miyajima N."/>
            <person name="Tanaka A."/>
            <person name="Kotani H."/>
            <person name="Nomura N."/>
            <person name="Ohara O."/>
        </authorList>
    </citation>
    <scope>NUCLEOTIDE SEQUENCE [LARGE SCALE MRNA] OF 1336-1795 (ISOFORM 2)</scope>
    <source>
        <tissue>Brain</tissue>
    </source>
</reference>
<reference key="6">
    <citation type="journal article" date="2003" name="Leukemia">
        <title>TET1, a member of a novel protein family, is fused to MLL in acute myeloid leukemia containing the t(10;11)(q22;q23).</title>
        <authorList>
            <person name="Lorsbach R.B."/>
            <person name="Moore J."/>
            <person name="Mathew S."/>
            <person name="Raimondi S.C."/>
            <person name="Mukatira S.T."/>
            <person name="Downing J.R."/>
        </authorList>
    </citation>
    <scope>IDENTIFICATION</scope>
    <scope>TISSUE SPECIFICITY</scope>
    <scope>DEVELOPMENTAL STAGE</scope>
</reference>
<reference key="7">
    <citation type="journal article" date="2004" name="Int. J. Oncol.">
        <title>Identification and characterization of human CXXC10 gene in silico.</title>
        <authorList>
            <person name="Katoh M."/>
            <person name="Katoh M."/>
        </authorList>
    </citation>
    <scope>IDENTIFICATION</scope>
</reference>
<reference key="8">
    <citation type="journal article" date="2013" name="EMBO J.">
        <title>TET2 and TET3 regulate GlcNAcylation and H3K4 methylation through OGT and SET1/COMPASS.</title>
        <authorList>
            <person name="Deplus R."/>
            <person name="Delatte B."/>
            <person name="Schwinn M.K."/>
            <person name="Defrance M."/>
            <person name="Mendez J."/>
            <person name="Murphy N."/>
            <person name="Dawson M.A."/>
            <person name="Volkmar M."/>
            <person name="Putmans P."/>
            <person name="Calonne E."/>
            <person name="Shih A.H."/>
            <person name="Levine R.L."/>
            <person name="Bernard O."/>
            <person name="Mercher T."/>
            <person name="Solary E."/>
            <person name="Urh M."/>
            <person name="Daniels D.L."/>
            <person name="Fuks F."/>
        </authorList>
    </citation>
    <scope>FUNCTION</scope>
    <scope>INTERACTION WITH HCFC1 AND OGT</scope>
</reference>
<reference key="9">
    <citation type="journal article" date="2013" name="Nature">
        <title>TET2 promotes histone O-GlcNAcylation during gene transcription.</title>
        <authorList>
            <person name="Chen Q."/>
            <person name="Chen Y."/>
            <person name="Bian C."/>
            <person name="Fujiki R."/>
            <person name="Yu X."/>
        </authorList>
    </citation>
    <scope>INTERACTION WITH OGT</scope>
</reference>
<reference key="10">
    <citation type="journal article" date="2013" name="Science">
        <title>CRL4 complex regulates mammalian oocyte survival and reprogramming by activation of TET proteins.</title>
        <authorList>
            <person name="Yu C."/>
            <person name="Zhang Y.L."/>
            <person name="Pan W.W."/>
            <person name="Li X.M."/>
            <person name="Wang Z.W."/>
            <person name="Ge Z.J."/>
            <person name="Zhou J.J."/>
            <person name="Cang Y."/>
            <person name="Tong C."/>
            <person name="Sun Q.Y."/>
            <person name="Fan H.Y."/>
        </authorList>
    </citation>
    <scope>INTERACTION WITH DCAF1</scope>
</reference>
<reference key="11">
    <citation type="journal article" date="2015" name="Mol. Cell">
        <title>CRL4(VprBP) E3 ligase promotes monoubiquitylation and chromatin binding of TET dioxygenases.</title>
        <authorList>
            <person name="Nakagawa T."/>
            <person name="Lv L."/>
            <person name="Nakagawa M."/>
            <person name="Yu Y."/>
            <person name="Yu C."/>
            <person name="D'Alessio A.C."/>
            <person name="Nakayama K."/>
            <person name="Fan H.Y."/>
            <person name="Chen X."/>
            <person name="Xiong Y."/>
        </authorList>
    </citation>
    <scope>INTERACTION WITH DCAF1</scope>
    <scope>MONOUBIQITINATION AT LYS-994</scope>
</reference>
<reference key="12">
    <citation type="journal article" date="2014" name="Nat. Struct. Mol. Biol.">
        <title>Uncovering global SUMOylation signaling networks in a site-specific manner.</title>
        <authorList>
            <person name="Hendriks I.A."/>
            <person name="D'Souza R.C."/>
            <person name="Yang B."/>
            <person name="Verlaan-de Vries M."/>
            <person name="Mann M."/>
            <person name="Vertegaal A.C."/>
        </authorList>
    </citation>
    <scope>SUMOYLATION [LARGE SCALE ANALYSIS] AT LYS-1397</scope>
    <scope>IDENTIFICATION BY MASS SPECTROMETRY [LARGE SCALE ANALYSIS]</scope>
</reference>
<reference key="13">
    <citation type="journal article" date="2017" name="Nat. Struct. Mol. Biol.">
        <title>Site-specific mapping of the human SUMO proteome reveals co-modification with phosphorylation.</title>
        <authorList>
            <person name="Hendriks I.A."/>
            <person name="Lyon D."/>
            <person name="Young C."/>
            <person name="Jensen L.J."/>
            <person name="Vertegaal A.C."/>
            <person name="Nielsen M.L."/>
        </authorList>
    </citation>
    <scope>SUMOYLATION [LARGE SCALE ANALYSIS] AT LYS-491; LYS-1188; LYS-1219; LYS-1397 AND LYS-1561</scope>
    <scope>IDENTIFICATION BY MASS SPECTROMETRY [LARGE SCALE ANALYSIS]</scope>
</reference>
<reference evidence="20" key="14">
    <citation type="journal article" date="2018" name="Structure">
        <title>DNA Sequence Recognition of Human CXXC Domains and Their Structural Determinants.</title>
        <authorList>
            <person name="Xu C."/>
            <person name="Liu K."/>
            <person name="Lei M."/>
            <person name="Yang A."/>
            <person name="Li Y."/>
            <person name="Hughes T.R."/>
            <person name="Min J."/>
        </authorList>
    </citation>
    <scope>X-RAY CRYSTALLOGRAPHY (1.57 ANGSTROMS) OF 49-98 IN COMPLEX WITH DNA</scope>
    <scope>FUNCTION</scope>
    <scope>DOMAIN CXXC-TYPE ZINC-FINGER</scope>
    <scope>ZINC-BINDING</scope>
</reference>
<reference key="15">
    <citation type="journal article" date="2020" name="Am. J. Hum. Genet.">
        <title>Delineation of a Human Mendelian Disorder of the DNA Demethylation Machinery: TET3 Deficiency.</title>
        <authorList>
            <person name="Beck D.B."/>
            <person name="Petracovici A."/>
            <person name="He C."/>
            <person name="Moore H.W."/>
            <person name="Louie R.J."/>
            <person name="Ansar M."/>
            <person name="Douzgou S."/>
            <person name="Sithambaram S."/>
            <person name="Cottrell T."/>
            <person name="Santos-Cortez R.L.P."/>
            <person name="Prijoles E.J."/>
            <person name="Bend R."/>
            <person name="Keren B."/>
            <person name="Mignot C."/>
            <person name="Nougues M.C."/>
            <person name="Ounap K."/>
            <person name="Reimand T."/>
            <person name="Pajusalu S."/>
            <person name="Zahid M."/>
            <person name="Saqib M.A.N."/>
            <person name="Buratti J."/>
            <person name="Seaby E.G."/>
            <person name="McWalter K."/>
            <person name="Telegrafi A."/>
            <person name="Baldridge D."/>
            <person name="Shinawi M."/>
            <person name="Leal S.M."/>
            <person name="Schaefer G.B."/>
            <person name="Stevenson R.E."/>
            <person name="Banka S."/>
            <person name="Bonasio R."/>
            <person name="Fahrner J.A."/>
        </authorList>
    </citation>
    <scope>INVOLVEMENT IN BEFAHRS</scope>
    <scope>VARIANTS BEFAHRS CYS-752; MET-851; LEU-908; CYS-1072; THR-1076; MET-1089; LEU-1677 AND 1695-GLN--ILE-1795 DEL</scope>
    <scope>CHARACTERIZATION OF VARIANTS BEFAHRS CYS-752; LEU-908; CYS-1072; THR-1076 AND MET-1089</scope>
    <scope>FUNCTION</scope>
    <scope>CATALYTIC ACTIVITY</scope>
    <scope>MUTAGENESIS OF 1077-HIS--ASP-1079</scope>
</reference>
<name>TET3_HUMAN</name>
<keyword id="KW-0002">3D-structure</keyword>
<keyword id="KW-0025">Alternative splicing</keyword>
<keyword id="KW-0156">Chromatin regulator</keyword>
<keyword id="KW-0158">Chromosome</keyword>
<keyword id="KW-0963">Cytoplasm</keyword>
<keyword id="KW-0217">Developmental protein</keyword>
<keyword id="KW-0223">Dioxygenase</keyword>
<keyword id="KW-0225">Disease variant</keyword>
<keyword id="KW-0238">DNA-binding</keyword>
<keyword id="KW-0991">Intellectual disability</keyword>
<keyword id="KW-0408">Iron</keyword>
<keyword id="KW-1017">Isopeptide bond</keyword>
<keyword id="KW-0479">Metal-binding</keyword>
<keyword id="KW-0539">Nucleus</keyword>
<keyword id="KW-0560">Oxidoreductase</keyword>
<keyword id="KW-1267">Proteomics identification</keyword>
<keyword id="KW-1185">Reference proteome</keyword>
<keyword id="KW-0832">Ubl conjugation</keyword>
<keyword id="KW-0862">Zinc</keyword>
<keyword id="KW-0863">Zinc-finger</keyword>
<comment type="function">
    <text evidence="2 6 8 11 12">Dioxygenase that catalyzes the conversion of the modified genomic base 5-methylcytosine (5mC) into 5-hydroxymethylcytosine (5hmC) and plays a key role in epigenetic chromatin reprogramming in the zygote following fertilization (PubMed:31928709). Also mediates subsequent conversion of 5hmC into 5-formylcytosine (5fC), and conversion of 5fC to 5-carboxylcytosine (5caC). Conversion of 5mC into 5hmC, 5fC and 5caC probably constitutes the first step in cytosine demethylation (By similarity). Selectively binds to the promoter region of target genes and contributes to regulate the expression of numerous developmental genes (PubMed:23217707). In zygotes, DNA demethylation occurs selectively in the paternal pronucleus before the first cell division, while the adjacent maternal pronucleus and certain paternally-imprinted loci are protected from this process. Participates in DNA demethylation in the paternal pronucleus by mediating conversion of 5mC into 5hmC, 5fC and 5caC. Does not mediate DNA demethylation of maternal pronucleus because of the presence of DPPA3/PGC7 on maternal chromatin that prevents TET3-binding to chromatin (By similarity). In addition to its role in DNA demethylation, also involved in the recruitment of the O-GlcNAc transferase OGT to CpG-rich transcription start sites of active genes, thereby promoting histone H2B GlcNAcylation by OGT (PubMed:23353889). Binds preferentially to DNA containing cytidine-phosphate-guanosine (CpG) dinucleotides over CpH (H=A, T, and C), hemimethylated-CpG and hemimethylated-hydroxymethyl-CpG (PubMed:29276034).</text>
</comment>
<comment type="catalytic activity">
    <reaction evidence="12">
        <text>a 5-methyl-2'-deoxycytidine in DNA + 2-oxoglutarate + O2 = a 5-hydroxymethyl-2'-deoxycytidine in DNA + succinate + CO2</text>
        <dbReference type="Rhea" id="RHEA:52636"/>
        <dbReference type="Rhea" id="RHEA-COMP:11370"/>
        <dbReference type="Rhea" id="RHEA-COMP:13315"/>
        <dbReference type="ChEBI" id="CHEBI:15379"/>
        <dbReference type="ChEBI" id="CHEBI:16526"/>
        <dbReference type="ChEBI" id="CHEBI:16810"/>
        <dbReference type="ChEBI" id="CHEBI:30031"/>
        <dbReference type="ChEBI" id="CHEBI:85454"/>
        <dbReference type="ChEBI" id="CHEBI:136731"/>
        <dbReference type="EC" id="1.14.11.80"/>
    </reaction>
    <physiologicalReaction direction="left-to-right" evidence="17">
        <dbReference type="Rhea" id="RHEA:52637"/>
    </physiologicalReaction>
</comment>
<comment type="catalytic activity">
    <reaction evidence="2">
        <text>a 5-hydroxymethyl-2'-deoxycytidine in DNA + 2-oxoglutarate + O2 = a 5-formyl-2'-deoxycytidine in DNA + succinate + CO2 + H2O</text>
        <dbReference type="Rhea" id="RHEA:53828"/>
        <dbReference type="Rhea" id="RHEA-COMP:13315"/>
        <dbReference type="Rhea" id="RHEA-COMP:13656"/>
        <dbReference type="ChEBI" id="CHEBI:15377"/>
        <dbReference type="ChEBI" id="CHEBI:15379"/>
        <dbReference type="ChEBI" id="CHEBI:16526"/>
        <dbReference type="ChEBI" id="CHEBI:16810"/>
        <dbReference type="ChEBI" id="CHEBI:30031"/>
        <dbReference type="ChEBI" id="CHEBI:136731"/>
        <dbReference type="ChEBI" id="CHEBI:137731"/>
        <dbReference type="EC" id="1.14.11.80"/>
    </reaction>
</comment>
<comment type="catalytic activity">
    <reaction evidence="2">
        <text>a 5-formyl-2'-deoxycytidine in DNA + 2-oxoglutarate + O2 = a 5-carboxyl-2'-deoxycytidine in DNA + succinate + CO2 + H(+)</text>
        <dbReference type="Rhea" id="RHEA:53832"/>
        <dbReference type="Rhea" id="RHEA-COMP:13656"/>
        <dbReference type="Rhea" id="RHEA-COMP:13657"/>
        <dbReference type="ChEBI" id="CHEBI:15378"/>
        <dbReference type="ChEBI" id="CHEBI:15379"/>
        <dbReference type="ChEBI" id="CHEBI:16526"/>
        <dbReference type="ChEBI" id="CHEBI:16810"/>
        <dbReference type="ChEBI" id="CHEBI:30031"/>
        <dbReference type="ChEBI" id="CHEBI:137731"/>
        <dbReference type="ChEBI" id="CHEBI:137732"/>
        <dbReference type="EC" id="1.14.11.80"/>
    </reaction>
</comment>
<comment type="cofactor">
    <cofactor evidence="1">
        <name>Fe(2+)</name>
        <dbReference type="ChEBI" id="CHEBI:29033"/>
    </cofactor>
    <text evidence="1">Binds 1 Fe(2+) ion per subunit.</text>
</comment>
<comment type="cofactor">
    <cofactor evidence="1">
        <name>Zn(2+)</name>
        <dbReference type="ChEBI" id="CHEBI:29105"/>
    </cofactor>
    <text evidence="1">The zinc ions have a structural role.</text>
</comment>
<comment type="subunit">
    <text evidence="7 8 9 10">Interacts with HCFC1 (PubMed:23353889). Interacts with OGT (PubMed:23222540, PubMed:23353889). Directly interacts (via C-terminus) with the DCAF1 component of the CRL4(VprBP) E3 ubiquitin-protein ligase complex (PubMed:24357321, PubMed:25557551).</text>
</comment>
<comment type="interaction">
    <interactant intactId="EBI-2831148">
        <id>O43151</id>
    </interactant>
    <interactant intactId="EBI-539828">
        <id>O15294</id>
        <label>OGT</label>
    </interactant>
    <organismsDiffer>false</organismsDiffer>
    <experiments>7</experiments>
</comment>
<comment type="subcellular location">
    <subcellularLocation>
        <location evidence="2">Nucleus</location>
    </subcellularLocation>
    <subcellularLocation>
        <location evidence="2">Cytoplasm</location>
    </subcellularLocation>
    <subcellularLocation>
        <location evidence="2">Chromosome</location>
    </subcellularLocation>
    <text evidence="2">At the zygotic stage, localizes in the male pronucleus, while it localizes to the cytoplasm at other preimplantation stages. Binds to the promoter of target genes, close to the transcription start site.</text>
</comment>
<comment type="alternative products">
    <event type="alternative splicing"/>
    <isoform>
        <id>O43151-1</id>
        <name>4</name>
        <sequence type="displayed"/>
    </isoform>
    <isoform>
        <id>O43151-2</id>
        <name>2</name>
        <sequence type="described" ref="VSP_021628"/>
    </isoform>
    <isoform>
        <id>O43151-3</id>
        <name>3</name>
        <sequence type="described" ref="VSP_034192"/>
    </isoform>
</comment>
<comment type="tissue specificity">
    <text evidence="5">Expressed in colon, muscle, adrenal gland and peripheral blood lymphocytes.</text>
</comment>
<comment type="developmental stage">
    <text evidence="5">Expressed in fetal brain but not adult brain.</text>
</comment>
<comment type="domain">
    <text evidence="2 11">The CXXC zinc finger mediates binding to CpG-DNA (PubMed:29276034). It mediates binding to DNA sequences containing unmethylated cytosine or 5-carboxylcytosine in 5'-CCG-3' DNA sequence motifs (By similarity).</text>
</comment>
<comment type="PTM">
    <text evidence="10">Monoubiquitinated at Lys-994 by the DCX (DDB1-CUL4-X-box) E3 ubiquitin-protein ligase complex called CRL4(VprBP) or CUL4A-RBX1-DDB1-DCAF1/VPRBP complex; this modification promotes binding to DNA.</text>
</comment>
<comment type="disease" evidence="12">
    <disease id="DI-05782">
        <name>Beck-Fahrner syndrome</name>
        <acronym>BEFAHRS</acronym>
        <description>A developmental disorder characterized by mild to severe intellectual disability, global developmental delay, hypotonia, autistic traits, movement disorders, growth abnormalities including overgrowth or poor growth, and facial dysmorphism. Both autosomal dominant and autosomal recessive inheritance has been reported.</description>
        <dbReference type="MIM" id="618798"/>
    </disease>
    <text>The disease is caused by variants affecting the gene represented in this entry.</text>
</comment>
<comment type="similarity">
    <text evidence="16">Belongs to the TET family.</text>
</comment>
<comment type="caution">
    <text evidence="16">Subsequent steps in cytosine demethylation are subject to discussion. According to a first model cytosine demethylation occurs through deamination of 5hmC into 5-hydroxymethyluracil (5hmU) and subsequent replacement by unmethylated cytosine by the base excision repair system. According to another model, cytosine demethylation is rather mediated via conversion of 5hmC into 5fC and 5caC, followed by excision by TDG.</text>
</comment>
<comment type="sequence caution" evidence="16">
    <conflict type="erroneous initiation">
        <sequence resource="EMBL-CDS" id="AAH22243"/>
    </conflict>
    <text>Truncated N-terminus.</text>
</comment>
<comment type="sequence caution" evidence="16">
    <conflict type="erroneous initiation">
        <sequence resource="EMBL-CDS" id="AAO33386"/>
    </conflict>
    <text>Truncated N-terminus.</text>
</comment>
<comment type="sequence caution" evidence="16">
    <conflict type="erroneous gene model prediction">
        <sequence resource="EMBL-CDS" id="AAX93057"/>
    </conflict>
</comment>